<feature type="transit peptide" description="Mitochondrion" evidence="1">
    <location>
        <begin position="1"/>
        <end position="24"/>
    </location>
</feature>
<feature type="chain" id="PRO_0000410135" description="Lipoyl synthase, mitochondrial">
    <location>
        <begin position="25"/>
        <end position="395"/>
    </location>
</feature>
<feature type="domain" description="Radical SAM core" evidence="2">
    <location>
        <begin position="122"/>
        <end position="346"/>
    </location>
</feature>
<feature type="binding site" evidence="1">
    <location>
        <position position="107"/>
    </location>
    <ligand>
        <name>[4Fe-4S] cluster</name>
        <dbReference type="ChEBI" id="CHEBI:49883"/>
        <label>1</label>
    </ligand>
</feature>
<feature type="binding site" evidence="1">
    <location>
        <position position="112"/>
    </location>
    <ligand>
        <name>[4Fe-4S] cluster</name>
        <dbReference type="ChEBI" id="CHEBI:49883"/>
        <label>1</label>
    </ligand>
</feature>
<feature type="binding site" evidence="1">
    <location>
        <position position="118"/>
    </location>
    <ligand>
        <name>[4Fe-4S] cluster</name>
        <dbReference type="ChEBI" id="CHEBI:49883"/>
        <label>1</label>
    </ligand>
</feature>
<feature type="binding site" evidence="1">
    <location>
        <position position="137"/>
    </location>
    <ligand>
        <name>[4Fe-4S] cluster</name>
        <dbReference type="ChEBI" id="CHEBI:49883"/>
        <label>2</label>
        <note>4Fe-4S-S-AdoMet</note>
    </ligand>
</feature>
<feature type="binding site" evidence="1">
    <location>
        <position position="141"/>
    </location>
    <ligand>
        <name>[4Fe-4S] cluster</name>
        <dbReference type="ChEBI" id="CHEBI:49883"/>
        <label>2</label>
        <note>4Fe-4S-S-AdoMet</note>
    </ligand>
</feature>
<feature type="binding site" evidence="1">
    <location>
        <position position="144"/>
    </location>
    <ligand>
        <name>[4Fe-4S] cluster</name>
        <dbReference type="ChEBI" id="CHEBI:49883"/>
        <label>2</label>
        <note>4Fe-4S-S-AdoMet</note>
    </ligand>
</feature>
<feature type="binding site" evidence="1">
    <location>
        <position position="357"/>
    </location>
    <ligand>
        <name>[4Fe-4S] cluster</name>
        <dbReference type="ChEBI" id="CHEBI:49883"/>
        <label>1</label>
    </ligand>
</feature>
<gene>
    <name type="ordered locus">CNBI2500</name>
</gene>
<comment type="function">
    <text evidence="1">Catalyzes the radical-mediated insertion of two sulfur atoms into the C-6 and C-8 positions of the octanoyl moiety bound to the lipoyl domains of lipoate-dependent enzymes, thereby converting the octanoylated domains into lipoylated derivatives.</text>
</comment>
<comment type="catalytic activity">
    <reaction evidence="1">
        <text>[[Fe-S] cluster scaffold protein carrying a second [4Fe-4S](2+) cluster] + N(6)-octanoyl-L-lysyl-[protein] + 2 oxidized [2Fe-2S]-[ferredoxin] + 2 S-adenosyl-L-methionine + 4 H(+) = [[Fe-S] cluster scaffold protein] + N(6)-[(R)-dihydrolipoyl]-L-lysyl-[protein] + 4 Fe(3+) + 2 hydrogen sulfide + 2 5'-deoxyadenosine + 2 L-methionine + 2 reduced [2Fe-2S]-[ferredoxin]</text>
        <dbReference type="Rhea" id="RHEA:16585"/>
        <dbReference type="Rhea" id="RHEA-COMP:9928"/>
        <dbReference type="Rhea" id="RHEA-COMP:10000"/>
        <dbReference type="Rhea" id="RHEA-COMP:10001"/>
        <dbReference type="Rhea" id="RHEA-COMP:10475"/>
        <dbReference type="Rhea" id="RHEA-COMP:14568"/>
        <dbReference type="Rhea" id="RHEA-COMP:14569"/>
        <dbReference type="ChEBI" id="CHEBI:15378"/>
        <dbReference type="ChEBI" id="CHEBI:17319"/>
        <dbReference type="ChEBI" id="CHEBI:29034"/>
        <dbReference type="ChEBI" id="CHEBI:29919"/>
        <dbReference type="ChEBI" id="CHEBI:33722"/>
        <dbReference type="ChEBI" id="CHEBI:33737"/>
        <dbReference type="ChEBI" id="CHEBI:33738"/>
        <dbReference type="ChEBI" id="CHEBI:57844"/>
        <dbReference type="ChEBI" id="CHEBI:59789"/>
        <dbReference type="ChEBI" id="CHEBI:78809"/>
        <dbReference type="ChEBI" id="CHEBI:83100"/>
        <dbReference type="EC" id="2.8.1.8"/>
    </reaction>
</comment>
<comment type="cofactor">
    <cofactor evidence="1">
        <name>[4Fe-4S] cluster</name>
        <dbReference type="ChEBI" id="CHEBI:49883"/>
    </cofactor>
    <text evidence="1">Binds 2 [4Fe-4S] clusters per subunit. One cluster is coordinated with 3 cysteines and an exchangeable S-adenosyl-L-methionine.</text>
</comment>
<comment type="pathway">
    <text evidence="1">Protein modification; protein lipoylation via endogenous pathway; protein N(6)-(lipoyl)lysine from octanoyl-[acyl-carrier-protein]: step 2/2.</text>
</comment>
<comment type="subcellular location">
    <subcellularLocation>
        <location evidence="1">Mitochondrion</location>
    </subcellularLocation>
</comment>
<comment type="similarity">
    <text evidence="1">Belongs to the radical SAM superfamily. Lipoyl synthase family.</text>
</comment>
<sequence length="395" mass="42938">MVKLPSASRIRSLATVPSTATRAFATVNPTPPAAQPTKSKPRFEKLDDGLTFDDFLSGDVPPENERVVLGNTKQPRLPSFLKHPIPTGASYSGIKKELRGLGLHTVCEEAKCPNIGECWGGGKGNATATIMLMGDQCTRGCRFCSVKTSRAPPPLDVHEPENTAEAISRWGLGYIVLTSVDRDDLVDGGAAHIASTISKIKQKAPNILVEALTPDFATKGVNVIHTVASSGLDVFAHNVETVERCTPFVRDRRAGFSQSLKVLEEAKKGAKAAGREILTKSSIMLGVGEMEEEIHETLRRLRASDVDVVTFGQYMRPTKRHMKVDRYVEPEEFAKWKNVAEGMGFLYVASGPLVRSSYKAGEFFIENVLKKRRAAAAEHAASQLSTQPPEIAAKV</sequence>
<dbReference type="EC" id="2.8.1.8" evidence="1"/>
<dbReference type="EMBL" id="AAEY01000045">
    <property type="protein sequence ID" value="EAL18758.1"/>
    <property type="molecule type" value="Genomic_DNA"/>
</dbReference>
<dbReference type="RefSeq" id="XP_773405.1">
    <property type="nucleotide sequence ID" value="XM_768312.1"/>
</dbReference>
<dbReference type="SMR" id="P0CO59"/>
<dbReference type="EnsemblFungi" id="AAW46468">
    <property type="protein sequence ID" value="AAW46468"/>
    <property type="gene ID" value="CNL04340"/>
</dbReference>
<dbReference type="GeneID" id="4938210"/>
<dbReference type="KEGG" id="cnb:CNBI2500"/>
<dbReference type="VEuPathDB" id="FungiDB:CNBI2500"/>
<dbReference type="HOGENOM" id="CLU_033144_1_0_1"/>
<dbReference type="OrthoDB" id="2468at5206"/>
<dbReference type="UniPathway" id="UPA00538">
    <property type="reaction ID" value="UER00593"/>
</dbReference>
<dbReference type="GO" id="GO:0005739">
    <property type="term" value="C:mitochondrion"/>
    <property type="evidence" value="ECO:0007669"/>
    <property type="project" value="UniProtKB-SubCell"/>
</dbReference>
<dbReference type="GO" id="GO:0051539">
    <property type="term" value="F:4 iron, 4 sulfur cluster binding"/>
    <property type="evidence" value="ECO:0007669"/>
    <property type="project" value="UniProtKB-UniRule"/>
</dbReference>
<dbReference type="GO" id="GO:0016992">
    <property type="term" value="F:lipoate synthase activity"/>
    <property type="evidence" value="ECO:0007669"/>
    <property type="project" value="UniProtKB-UniRule"/>
</dbReference>
<dbReference type="GO" id="GO:0046872">
    <property type="term" value="F:metal ion binding"/>
    <property type="evidence" value="ECO:0007669"/>
    <property type="project" value="UniProtKB-KW"/>
</dbReference>
<dbReference type="CDD" id="cd01335">
    <property type="entry name" value="Radical_SAM"/>
    <property type="match status" value="1"/>
</dbReference>
<dbReference type="FunFam" id="3.20.20.70:FF:000240">
    <property type="entry name" value="Lipoyl synthase, mitochondrial"/>
    <property type="match status" value="1"/>
</dbReference>
<dbReference type="Gene3D" id="3.20.20.70">
    <property type="entry name" value="Aldolase class I"/>
    <property type="match status" value="1"/>
</dbReference>
<dbReference type="HAMAP" id="MF_00206">
    <property type="entry name" value="Lipoyl_synth"/>
    <property type="match status" value="1"/>
</dbReference>
<dbReference type="InterPro" id="IPR013785">
    <property type="entry name" value="Aldolase_TIM"/>
</dbReference>
<dbReference type="InterPro" id="IPR006638">
    <property type="entry name" value="Elp3/MiaA/NifB-like_rSAM"/>
</dbReference>
<dbReference type="InterPro" id="IPR031691">
    <property type="entry name" value="LIAS_N"/>
</dbReference>
<dbReference type="InterPro" id="IPR003698">
    <property type="entry name" value="Lipoyl_synth"/>
</dbReference>
<dbReference type="InterPro" id="IPR007197">
    <property type="entry name" value="rSAM"/>
</dbReference>
<dbReference type="NCBIfam" id="TIGR00510">
    <property type="entry name" value="lipA"/>
    <property type="match status" value="1"/>
</dbReference>
<dbReference type="NCBIfam" id="NF004019">
    <property type="entry name" value="PRK05481.1"/>
    <property type="match status" value="1"/>
</dbReference>
<dbReference type="NCBIfam" id="NF009544">
    <property type="entry name" value="PRK12928.1"/>
    <property type="match status" value="1"/>
</dbReference>
<dbReference type="PANTHER" id="PTHR10949">
    <property type="entry name" value="LIPOYL SYNTHASE"/>
    <property type="match status" value="1"/>
</dbReference>
<dbReference type="PANTHER" id="PTHR10949:SF0">
    <property type="entry name" value="LIPOYL SYNTHASE, MITOCHONDRIAL"/>
    <property type="match status" value="1"/>
</dbReference>
<dbReference type="Pfam" id="PF16881">
    <property type="entry name" value="LIAS_N"/>
    <property type="match status" value="1"/>
</dbReference>
<dbReference type="Pfam" id="PF04055">
    <property type="entry name" value="Radical_SAM"/>
    <property type="match status" value="1"/>
</dbReference>
<dbReference type="SFLD" id="SFLDF00271">
    <property type="entry name" value="lipoyl_synthase"/>
    <property type="match status" value="1"/>
</dbReference>
<dbReference type="SFLD" id="SFLDG01058">
    <property type="entry name" value="lipoyl_synthase_like"/>
    <property type="match status" value="1"/>
</dbReference>
<dbReference type="SMART" id="SM00729">
    <property type="entry name" value="Elp3"/>
    <property type="match status" value="1"/>
</dbReference>
<dbReference type="SUPFAM" id="SSF102114">
    <property type="entry name" value="Radical SAM enzymes"/>
    <property type="match status" value="1"/>
</dbReference>
<dbReference type="PROSITE" id="PS51918">
    <property type="entry name" value="RADICAL_SAM"/>
    <property type="match status" value="1"/>
</dbReference>
<evidence type="ECO:0000255" key="1">
    <source>
        <dbReference type="HAMAP-Rule" id="MF_03123"/>
    </source>
</evidence>
<evidence type="ECO:0000255" key="2">
    <source>
        <dbReference type="PROSITE-ProRule" id="PRU01266"/>
    </source>
</evidence>
<keyword id="KW-0004">4Fe-4S</keyword>
<keyword id="KW-0408">Iron</keyword>
<keyword id="KW-0411">Iron-sulfur</keyword>
<keyword id="KW-0479">Metal-binding</keyword>
<keyword id="KW-0496">Mitochondrion</keyword>
<keyword id="KW-0949">S-adenosyl-L-methionine</keyword>
<keyword id="KW-0808">Transferase</keyword>
<keyword id="KW-0809">Transit peptide</keyword>
<reference key="1">
    <citation type="journal article" date="2005" name="Science">
        <title>The genome of the basidiomycetous yeast and human pathogen Cryptococcus neoformans.</title>
        <authorList>
            <person name="Loftus B.J."/>
            <person name="Fung E."/>
            <person name="Roncaglia P."/>
            <person name="Rowley D."/>
            <person name="Amedeo P."/>
            <person name="Bruno D."/>
            <person name="Vamathevan J."/>
            <person name="Miranda M."/>
            <person name="Anderson I.J."/>
            <person name="Fraser J.A."/>
            <person name="Allen J.E."/>
            <person name="Bosdet I.E."/>
            <person name="Brent M.R."/>
            <person name="Chiu R."/>
            <person name="Doering T.L."/>
            <person name="Donlin M.J."/>
            <person name="D'Souza C.A."/>
            <person name="Fox D.S."/>
            <person name="Grinberg V."/>
            <person name="Fu J."/>
            <person name="Fukushima M."/>
            <person name="Haas B.J."/>
            <person name="Huang J.C."/>
            <person name="Janbon G."/>
            <person name="Jones S.J.M."/>
            <person name="Koo H.L."/>
            <person name="Krzywinski M.I."/>
            <person name="Kwon-Chung K.J."/>
            <person name="Lengeler K.B."/>
            <person name="Maiti R."/>
            <person name="Marra M.A."/>
            <person name="Marra R.E."/>
            <person name="Mathewson C.A."/>
            <person name="Mitchell T.G."/>
            <person name="Pertea M."/>
            <person name="Riggs F.R."/>
            <person name="Salzberg S.L."/>
            <person name="Schein J.E."/>
            <person name="Shvartsbeyn A."/>
            <person name="Shin H."/>
            <person name="Shumway M."/>
            <person name="Specht C.A."/>
            <person name="Suh B.B."/>
            <person name="Tenney A."/>
            <person name="Utterback T.R."/>
            <person name="Wickes B.L."/>
            <person name="Wortman J.R."/>
            <person name="Wye N.H."/>
            <person name="Kronstad J.W."/>
            <person name="Lodge J.K."/>
            <person name="Heitman J."/>
            <person name="Davis R.W."/>
            <person name="Fraser C.M."/>
            <person name="Hyman R.W."/>
        </authorList>
    </citation>
    <scope>NUCLEOTIDE SEQUENCE [LARGE SCALE GENOMIC DNA]</scope>
    <source>
        <strain>B-3501A</strain>
    </source>
</reference>
<accession>P0CO59</accession>
<accession>Q55LW2</accession>
<accession>Q5K8V7</accession>
<protein>
    <recommendedName>
        <fullName evidence="1">Lipoyl synthase, mitochondrial</fullName>
        <ecNumber evidence="1">2.8.1.8</ecNumber>
    </recommendedName>
    <alternativeName>
        <fullName evidence="1">Lipoate synthase</fullName>
        <shortName evidence="1">LS</shortName>
        <shortName evidence="1">Lip-syn</shortName>
    </alternativeName>
    <alternativeName>
        <fullName evidence="1">Lipoic acid synthase</fullName>
    </alternativeName>
</protein>
<organism>
    <name type="scientific">Cryptococcus neoformans var. neoformans serotype D (strain B-3501A)</name>
    <name type="common">Filobasidiella neoformans</name>
    <dbReference type="NCBI Taxonomy" id="283643"/>
    <lineage>
        <taxon>Eukaryota</taxon>
        <taxon>Fungi</taxon>
        <taxon>Dikarya</taxon>
        <taxon>Basidiomycota</taxon>
        <taxon>Agaricomycotina</taxon>
        <taxon>Tremellomycetes</taxon>
        <taxon>Tremellales</taxon>
        <taxon>Cryptococcaceae</taxon>
        <taxon>Cryptococcus</taxon>
        <taxon>Cryptococcus neoformans species complex</taxon>
    </lineage>
</organism>
<proteinExistence type="inferred from homology"/>
<name>LIPA_CRYNB</name>